<reference key="1">
    <citation type="journal article" date="2009" name="Infect. Immun.">
        <title>Comparative genomics reveal extensive transposon-mediated genomic plasticity and diversity among potential effector proteins within the genus Coxiella.</title>
        <authorList>
            <person name="Beare P.A."/>
            <person name="Unsworth N."/>
            <person name="Andoh M."/>
            <person name="Voth D.E."/>
            <person name="Omsland A."/>
            <person name="Gilk S.D."/>
            <person name="Williams K.P."/>
            <person name="Sobral B.W."/>
            <person name="Kupko J.J. III"/>
            <person name="Porcella S.F."/>
            <person name="Samuel J.E."/>
            <person name="Heinzen R.A."/>
        </authorList>
    </citation>
    <scope>NUCLEOTIDE SEQUENCE [LARGE SCALE GENOMIC DNA]</scope>
    <source>
        <strain>Dugway 5J108-111</strain>
    </source>
</reference>
<accession>A9KFM0</accession>
<dbReference type="EC" id="5.1.1.1" evidence="1"/>
<dbReference type="EMBL" id="CP000733">
    <property type="protein sequence ID" value="ABS77518.1"/>
    <property type="molecule type" value="Genomic_DNA"/>
</dbReference>
<dbReference type="RefSeq" id="WP_011996838.1">
    <property type="nucleotide sequence ID" value="NC_009727.1"/>
</dbReference>
<dbReference type="SMR" id="A9KFM0"/>
<dbReference type="KEGG" id="cbd:CBUD_0932"/>
<dbReference type="HOGENOM" id="CLU_028393_1_0_6"/>
<dbReference type="UniPathway" id="UPA00042">
    <property type="reaction ID" value="UER00497"/>
</dbReference>
<dbReference type="Proteomes" id="UP000008555">
    <property type="component" value="Chromosome"/>
</dbReference>
<dbReference type="GO" id="GO:0005829">
    <property type="term" value="C:cytosol"/>
    <property type="evidence" value="ECO:0007669"/>
    <property type="project" value="TreeGrafter"/>
</dbReference>
<dbReference type="GO" id="GO:0008784">
    <property type="term" value="F:alanine racemase activity"/>
    <property type="evidence" value="ECO:0007669"/>
    <property type="project" value="UniProtKB-UniRule"/>
</dbReference>
<dbReference type="GO" id="GO:0030170">
    <property type="term" value="F:pyridoxal phosphate binding"/>
    <property type="evidence" value="ECO:0007669"/>
    <property type="project" value="UniProtKB-UniRule"/>
</dbReference>
<dbReference type="GO" id="GO:0030632">
    <property type="term" value="P:D-alanine biosynthetic process"/>
    <property type="evidence" value="ECO:0007669"/>
    <property type="project" value="UniProtKB-UniRule"/>
</dbReference>
<dbReference type="CDD" id="cd06827">
    <property type="entry name" value="PLPDE_III_AR_proteobact"/>
    <property type="match status" value="1"/>
</dbReference>
<dbReference type="FunFam" id="2.40.37.10:FF:000002">
    <property type="entry name" value="Alanine racemase"/>
    <property type="match status" value="1"/>
</dbReference>
<dbReference type="FunFam" id="3.20.20.10:FF:000044">
    <property type="entry name" value="Alanine racemase"/>
    <property type="match status" value="1"/>
</dbReference>
<dbReference type="Gene3D" id="3.20.20.10">
    <property type="entry name" value="Alanine racemase"/>
    <property type="match status" value="1"/>
</dbReference>
<dbReference type="Gene3D" id="2.40.37.10">
    <property type="entry name" value="Lyase, Ornithine Decarboxylase, Chain A, domain 1"/>
    <property type="match status" value="1"/>
</dbReference>
<dbReference type="HAMAP" id="MF_01201">
    <property type="entry name" value="Ala_racemase"/>
    <property type="match status" value="1"/>
</dbReference>
<dbReference type="InterPro" id="IPR000821">
    <property type="entry name" value="Ala_racemase"/>
</dbReference>
<dbReference type="InterPro" id="IPR009006">
    <property type="entry name" value="Ala_racemase/Decarboxylase_C"/>
</dbReference>
<dbReference type="InterPro" id="IPR011079">
    <property type="entry name" value="Ala_racemase_C"/>
</dbReference>
<dbReference type="InterPro" id="IPR001608">
    <property type="entry name" value="Ala_racemase_N"/>
</dbReference>
<dbReference type="InterPro" id="IPR029066">
    <property type="entry name" value="PLP-binding_barrel"/>
</dbReference>
<dbReference type="NCBIfam" id="TIGR00492">
    <property type="entry name" value="alr"/>
    <property type="match status" value="1"/>
</dbReference>
<dbReference type="PANTHER" id="PTHR30511">
    <property type="entry name" value="ALANINE RACEMASE"/>
    <property type="match status" value="1"/>
</dbReference>
<dbReference type="PANTHER" id="PTHR30511:SF4">
    <property type="entry name" value="ALANINE RACEMASE, BIOSYNTHETIC"/>
    <property type="match status" value="1"/>
</dbReference>
<dbReference type="Pfam" id="PF00842">
    <property type="entry name" value="Ala_racemase_C"/>
    <property type="match status" value="1"/>
</dbReference>
<dbReference type="Pfam" id="PF01168">
    <property type="entry name" value="Ala_racemase_N"/>
    <property type="match status" value="1"/>
</dbReference>
<dbReference type="PRINTS" id="PR00992">
    <property type="entry name" value="ALARACEMASE"/>
</dbReference>
<dbReference type="SMART" id="SM01005">
    <property type="entry name" value="Ala_racemase_C"/>
    <property type="match status" value="1"/>
</dbReference>
<dbReference type="SUPFAM" id="SSF50621">
    <property type="entry name" value="Alanine racemase C-terminal domain-like"/>
    <property type="match status" value="1"/>
</dbReference>
<dbReference type="SUPFAM" id="SSF51419">
    <property type="entry name" value="PLP-binding barrel"/>
    <property type="match status" value="1"/>
</dbReference>
<organism>
    <name type="scientific">Coxiella burnetii (strain Dugway 5J108-111)</name>
    <dbReference type="NCBI Taxonomy" id="434922"/>
    <lineage>
        <taxon>Bacteria</taxon>
        <taxon>Pseudomonadati</taxon>
        <taxon>Pseudomonadota</taxon>
        <taxon>Gammaproteobacteria</taxon>
        <taxon>Legionellales</taxon>
        <taxon>Coxiellaceae</taxon>
        <taxon>Coxiella</taxon>
    </lineage>
</organism>
<evidence type="ECO:0000255" key="1">
    <source>
        <dbReference type="HAMAP-Rule" id="MF_01201"/>
    </source>
</evidence>
<keyword id="KW-0413">Isomerase</keyword>
<keyword id="KW-0663">Pyridoxal phosphate</keyword>
<name>ALR_COXBN</name>
<proteinExistence type="inferred from homology"/>
<gene>
    <name type="primary">alr</name>
    <name type="ordered locus">CBUD_0932</name>
</gene>
<feature type="chain" id="PRO_1000085500" description="Alanine racemase">
    <location>
        <begin position="1"/>
        <end position="364"/>
    </location>
</feature>
<feature type="active site" description="Proton acceptor; specific for D-alanine" evidence="1">
    <location>
        <position position="34"/>
    </location>
</feature>
<feature type="active site" description="Proton acceptor; specific for L-alanine" evidence="1">
    <location>
        <position position="259"/>
    </location>
</feature>
<feature type="binding site" evidence="1">
    <location>
        <position position="129"/>
    </location>
    <ligand>
        <name>substrate</name>
    </ligand>
</feature>
<feature type="binding site" evidence="1">
    <location>
        <position position="307"/>
    </location>
    <ligand>
        <name>substrate</name>
    </ligand>
</feature>
<feature type="modified residue" description="N6-(pyridoxal phosphate)lysine" evidence="1">
    <location>
        <position position="34"/>
    </location>
</feature>
<protein>
    <recommendedName>
        <fullName evidence="1">Alanine racemase</fullName>
        <ecNumber evidence="1">5.1.1.1</ecNumber>
    </recommendedName>
</protein>
<sequence>MNRATATINVTALKHNLSQIKALAPKSLAWVMIKSNGYGHGLVRVAKALSDANAFGVACIDEALTLREVGIKSPIIVMKGFYNEAELSQFARHRLGAVIHCSDQVSLLEKTNLTSSLSVWLKIDTGMNRLGFSVEQSPAVYNQLKTSSSIQKPIGLMTHLADADNENKTFTELQIKRFFSVTEKMIGPKSIVNSAGFFAYPNALVDWIRPGIILYGISPFGINYNSFKEKIEKKFRPVMTLSAKIIAIKNRRQNDSVGYGCTWSCPEDMPIAIVSIGYGDGYPRHAPSGTPVLLNGKICPLIGRVSMDMIAIDLRSQPNAQVGDDVILWGEGLPVEIIAEKAGTIAYELLCKITQRVQFIEIEK</sequence>
<comment type="function">
    <text evidence="1">Catalyzes the interconversion of L-alanine and D-alanine. May also act on other amino acids.</text>
</comment>
<comment type="catalytic activity">
    <reaction evidence="1">
        <text>L-alanine = D-alanine</text>
        <dbReference type="Rhea" id="RHEA:20249"/>
        <dbReference type="ChEBI" id="CHEBI:57416"/>
        <dbReference type="ChEBI" id="CHEBI:57972"/>
        <dbReference type="EC" id="5.1.1.1"/>
    </reaction>
</comment>
<comment type="cofactor">
    <cofactor evidence="1">
        <name>pyridoxal 5'-phosphate</name>
        <dbReference type="ChEBI" id="CHEBI:597326"/>
    </cofactor>
</comment>
<comment type="pathway">
    <text evidence="1">Amino-acid biosynthesis; D-alanine biosynthesis; D-alanine from L-alanine: step 1/1.</text>
</comment>
<comment type="similarity">
    <text evidence="1">Belongs to the alanine racemase family.</text>
</comment>